<organism evidence="1">
    <name type="scientific">Hystrix cristata</name>
    <name type="common">North African crested porcupine</name>
    <dbReference type="NCBI Taxonomy" id="10137"/>
    <lineage>
        <taxon>Eukaryota</taxon>
        <taxon>Metazoa</taxon>
        <taxon>Chordata</taxon>
        <taxon>Craniata</taxon>
        <taxon>Vertebrata</taxon>
        <taxon>Euteleostomi</taxon>
        <taxon>Mammalia</taxon>
        <taxon>Eutheria</taxon>
        <taxon>Euarchontoglires</taxon>
        <taxon>Glires</taxon>
        <taxon>Rodentia</taxon>
        <taxon>Hystricomorpha</taxon>
        <taxon>Hystricidae</taxon>
        <taxon>Hystrix</taxon>
    </lineage>
</organism>
<proteinExistence type="evidence at protein level"/>
<evidence type="ECO:0000305" key="1"/>
<protein>
    <recommendedName>
        <fullName>Odorant-binding protein 2</fullName>
    </recommendedName>
    <alternativeName>
        <fullName>Odorant-binding protein II</fullName>
        <shortName>OBP II</shortName>
    </alternativeName>
    <alternativeName>
        <fullName>Olfactory mucosa pyrazine-binding protein II</fullName>
    </alternativeName>
</protein>
<comment type="function">
    <text>This soluble protein may play a specific role in odor discrimination and perception.</text>
</comment>
<comment type="subcellular location">
    <subcellularLocation>
        <location>Secreted</location>
        <location>Extracellular space</location>
    </subcellularLocation>
</comment>
<comment type="tissue specificity">
    <text>Nasal mucosa.</text>
</comment>
<comment type="similarity">
    <text evidence="1">Belongs to the calycin superfamily. Lipocalin family.</text>
</comment>
<sequence>EHIDYSQVSGDWHSLSIAADSMDKIRENGELRMHLNHL</sequence>
<accession>P81648</accession>
<name>OBP2_HYSCR</name>
<feature type="chain" id="PRO_0000201027" description="Odorant-binding protein 2">
    <location>
        <begin position="1"/>
        <end position="38" status="greater than"/>
    </location>
</feature>
<feature type="non-terminal residue" evidence="1">
    <location>
        <position position="38"/>
    </location>
</feature>
<keyword id="KW-0903">Direct protein sequencing</keyword>
<keyword id="KW-0552">Olfaction</keyword>
<keyword id="KW-0964">Secreted</keyword>
<keyword id="KW-0716">Sensory transduction</keyword>
<keyword id="KW-0813">Transport</keyword>
<dbReference type="SMR" id="P81648"/>
<dbReference type="GO" id="GO:0005576">
    <property type="term" value="C:extracellular region"/>
    <property type="evidence" value="ECO:0007669"/>
    <property type="project" value="UniProtKB-SubCell"/>
</dbReference>
<dbReference type="GO" id="GO:0007608">
    <property type="term" value="P:sensory perception of smell"/>
    <property type="evidence" value="ECO:0007669"/>
    <property type="project" value="UniProtKB-KW"/>
</dbReference>
<dbReference type="Gene3D" id="2.40.128.20">
    <property type="match status" value="1"/>
</dbReference>
<dbReference type="InterPro" id="IPR012674">
    <property type="entry name" value="Calycin"/>
</dbReference>
<dbReference type="InterPro" id="IPR022272">
    <property type="entry name" value="Lipocalin_CS"/>
</dbReference>
<dbReference type="SUPFAM" id="SSF50814">
    <property type="entry name" value="Lipocalins"/>
    <property type="match status" value="1"/>
</dbReference>
<dbReference type="PROSITE" id="PS00213">
    <property type="entry name" value="LIPOCALIN"/>
    <property type="match status" value="1"/>
</dbReference>
<reference evidence="1" key="1">
    <citation type="journal article" date="1997" name="Comp. Biochem. Physiol.">
        <title>Microheterogeneity of odorant-binding proteins in the porcupine revealed by N-terminal sequencing and mass spectrometry.</title>
        <authorList>
            <person name="Ganni M."/>
            <person name="Garibotti M."/>
            <person name="Scaloni A."/>
            <person name="Pucci P."/>
            <person name="Pelosi P."/>
        </authorList>
    </citation>
    <scope>PROTEIN SEQUENCE</scope>
    <source>
        <tissue>Nasal mucosa</tissue>
    </source>
</reference>
<reference evidence="1" key="2">
    <citation type="journal article" date="1993" name="Comp. Biochem. Physiol.">
        <title>Multiple types and forms of odorant-binding proteins in the Old-World porcupine Hystrix cristata.</title>
        <authorList>
            <person name="Felicioli A."/>
            <person name="Ganni M."/>
            <person name="Garibotti M."/>
            <person name="Pelosi P."/>
        </authorList>
    </citation>
    <scope>CHARACTERIZATION</scope>
    <source>
        <tissue>Nasal mucosa</tissue>
    </source>
</reference>